<reference key="1">
    <citation type="submission" date="2007-12" db="EMBL/GenBank/DDBJ databases">
        <title>Brucella suis ATCC 23445 whole genome shotgun sequencing project.</title>
        <authorList>
            <person name="Setubal J.C."/>
            <person name="Bowns C."/>
            <person name="Boyle S."/>
            <person name="Crasta O.R."/>
            <person name="Czar M.J."/>
            <person name="Dharmanolla C."/>
            <person name="Gillespie J.J."/>
            <person name="Kenyon R.W."/>
            <person name="Lu J."/>
            <person name="Mane S."/>
            <person name="Mohapatra S."/>
            <person name="Nagrani S."/>
            <person name="Purkayastha A."/>
            <person name="Rajasimha H.K."/>
            <person name="Shallom J.M."/>
            <person name="Shallom S."/>
            <person name="Shukla M."/>
            <person name="Snyder E.E."/>
            <person name="Sobral B.W."/>
            <person name="Wattam A.R."/>
            <person name="Will R."/>
            <person name="Williams K."/>
            <person name="Yoo H."/>
            <person name="Bruce D."/>
            <person name="Detter C."/>
            <person name="Munk C."/>
            <person name="Brettin T.S."/>
        </authorList>
    </citation>
    <scope>NUCLEOTIDE SEQUENCE [LARGE SCALE GENOMIC DNA]</scope>
    <source>
        <strain>ATCC 23445 / NCTC 10510</strain>
    </source>
</reference>
<dbReference type="EC" id="5.1.1.1" evidence="1"/>
<dbReference type="EMBL" id="CP000912">
    <property type="protein sequence ID" value="ABY39871.1"/>
    <property type="molecule type" value="Genomic_DNA"/>
</dbReference>
<dbReference type="SMR" id="A9WVT5"/>
<dbReference type="KEGG" id="bmt:BSUIS_B0915"/>
<dbReference type="HOGENOM" id="CLU_028393_1_1_5"/>
<dbReference type="UniPathway" id="UPA00042">
    <property type="reaction ID" value="UER00497"/>
</dbReference>
<dbReference type="Proteomes" id="UP000008545">
    <property type="component" value="Chromosome II"/>
</dbReference>
<dbReference type="GO" id="GO:0005829">
    <property type="term" value="C:cytosol"/>
    <property type="evidence" value="ECO:0007669"/>
    <property type="project" value="TreeGrafter"/>
</dbReference>
<dbReference type="GO" id="GO:0008784">
    <property type="term" value="F:alanine racemase activity"/>
    <property type="evidence" value="ECO:0007669"/>
    <property type="project" value="UniProtKB-UniRule"/>
</dbReference>
<dbReference type="GO" id="GO:0030170">
    <property type="term" value="F:pyridoxal phosphate binding"/>
    <property type="evidence" value="ECO:0007669"/>
    <property type="project" value="UniProtKB-UniRule"/>
</dbReference>
<dbReference type="GO" id="GO:0030632">
    <property type="term" value="P:D-alanine biosynthetic process"/>
    <property type="evidence" value="ECO:0007669"/>
    <property type="project" value="UniProtKB-UniRule"/>
</dbReference>
<dbReference type="CDD" id="cd00430">
    <property type="entry name" value="PLPDE_III_AR"/>
    <property type="match status" value="1"/>
</dbReference>
<dbReference type="Gene3D" id="3.20.20.10">
    <property type="entry name" value="Alanine racemase"/>
    <property type="match status" value="1"/>
</dbReference>
<dbReference type="Gene3D" id="2.40.37.10">
    <property type="entry name" value="Lyase, Ornithine Decarboxylase, Chain A, domain 1"/>
    <property type="match status" value="1"/>
</dbReference>
<dbReference type="HAMAP" id="MF_01201">
    <property type="entry name" value="Ala_racemase"/>
    <property type="match status" value="1"/>
</dbReference>
<dbReference type="InterPro" id="IPR000821">
    <property type="entry name" value="Ala_racemase"/>
</dbReference>
<dbReference type="InterPro" id="IPR009006">
    <property type="entry name" value="Ala_racemase/Decarboxylase_C"/>
</dbReference>
<dbReference type="InterPro" id="IPR011079">
    <property type="entry name" value="Ala_racemase_C"/>
</dbReference>
<dbReference type="InterPro" id="IPR001608">
    <property type="entry name" value="Ala_racemase_N"/>
</dbReference>
<dbReference type="InterPro" id="IPR020622">
    <property type="entry name" value="Ala_racemase_pyridoxalP-BS"/>
</dbReference>
<dbReference type="InterPro" id="IPR029066">
    <property type="entry name" value="PLP-binding_barrel"/>
</dbReference>
<dbReference type="NCBIfam" id="TIGR00492">
    <property type="entry name" value="alr"/>
    <property type="match status" value="1"/>
</dbReference>
<dbReference type="PANTHER" id="PTHR30511">
    <property type="entry name" value="ALANINE RACEMASE"/>
    <property type="match status" value="1"/>
</dbReference>
<dbReference type="PANTHER" id="PTHR30511:SF0">
    <property type="entry name" value="ALANINE RACEMASE, CATABOLIC-RELATED"/>
    <property type="match status" value="1"/>
</dbReference>
<dbReference type="Pfam" id="PF00842">
    <property type="entry name" value="Ala_racemase_C"/>
    <property type="match status" value="1"/>
</dbReference>
<dbReference type="Pfam" id="PF01168">
    <property type="entry name" value="Ala_racemase_N"/>
    <property type="match status" value="1"/>
</dbReference>
<dbReference type="PRINTS" id="PR00992">
    <property type="entry name" value="ALARACEMASE"/>
</dbReference>
<dbReference type="SMART" id="SM01005">
    <property type="entry name" value="Ala_racemase_C"/>
    <property type="match status" value="1"/>
</dbReference>
<dbReference type="SUPFAM" id="SSF50621">
    <property type="entry name" value="Alanine racemase C-terminal domain-like"/>
    <property type="match status" value="1"/>
</dbReference>
<dbReference type="SUPFAM" id="SSF51419">
    <property type="entry name" value="PLP-binding barrel"/>
    <property type="match status" value="1"/>
</dbReference>
<dbReference type="PROSITE" id="PS00395">
    <property type="entry name" value="ALANINE_RACEMASE"/>
    <property type="match status" value="1"/>
</dbReference>
<name>ALR_BRUSI</name>
<keyword id="KW-0413">Isomerase</keyword>
<keyword id="KW-0663">Pyridoxal phosphate</keyword>
<protein>
    <recommendedName>
        <fullName evidence="1">Alanine racemase</fullName>
        <ecNumber evidence="1">5.1.1.1</ecNumber>
    </recommendedName>
</protein>
<comment type="function">
    <text evidence="1">Catalyzes the interconversion of L-alanine and D-alanine. May also act on other amino acids.</text>
</comment>
<comment type="catalytic activity">
    <reaction evidence="1">
        <text>L-alanine = D-alanine</text>
        <dbReference type="Rhea" id="RHEA:20249"/>
        <dbReference type="ChEBI" id="CHEBI:57416"/>
        <dbReference type="ChEBI" id="CHEBI:57972"/>
        <dbReference type="EC" id="5.1.1.1"/>
    </reaction>
</comment>
<comment type="cofactor">
    <cofactor evidence="1">
        <name>pyridoxal 5'-phosphate</name>
        <dbReference type="ChEBI" id="CHEBI:597326"/>
    </cofactor>
</comment>
<comment type="pathway">
    <text evidence="1">Amino-acid biosynthesis; D-alanine biosynthesis; D-alanine from L-alanine: step 1/1.</text>
</comment>
<comment type="similarity">
    <text evidence="1">Belongs to the alanine racemase family.</text>
</comment>
<sequence>MSLPFSQDERDLAAGGILTIDLAALRHNYSAIATRIAPTRTAAVVKADAYGLGASRVAPAFYEAGCRDFFVAHLGEAVALKPFLKPDATLYVLNGLQPGTQAACAREGILPVLNSLEQVENWAALATRLGKKLPALLQFDTGMSRLGLSAKEFDRLLENVTLLSRIDIKFAISHLANGDEPGNAANARQLAKMTALLARLPKLPAALANSGGTFLGKTYYFDLARPGIALYGIDPERQHDFSDKVAHENKKPKHSILPVLTLSARVIQVRDVDKGATVGYGGTYVANGPMRIATIAVGYADGLFRSLSNKGAAFFGDTRLPIIGRVSMDSITLDVTSLPEGTLKLGSLVELIGPHQRLEDVARDCDTIPYEILTALGNRYARVYVYVNGGGTSTTA</sequence>
<organism>
    <name type="scientific">Brucella suis (strain ATCC 23445 / NCTC 10510)</name>
    <dbReference type="NCBI Taxonomy" id="470137"/>
    <lineage>
        <taxon>Bacteria</taxon>
        <taxon>Pseudomonadati</taxon>
        <taxon>Pseudomonadota</taxon>
        <taxon>Alphaproteobacteria</taxon>
        <taxon>Hyphomicrobiales</taxon>
        <taxon>Brucellaceae</taxon>
        <taxon>Brucella/Ochrobactrum group</taxon>
        <taxon>Brucella</taxon>
    </lineage>
</organism>
<evidence type="ECO:0000255" key="1">
    <source>
        <dbReference type="HAMAP-Rule" id="MF_01201"/>
    </source>
</evidence>
<gene>
    <name type="primary">alr</name>
    <name type="ordered locus">BSUIS_B0915</name>
</gene>
<feature type="chain" id="PRO_1000085498" description="Alanine racemase">
    <location>
        <begin position="1"/>
        <end position="396"/>
    </location>
</feature>
<feature type="active site" description="Proton acceptor; specific for D-alanine" evidence="1">
    <location>
        <position position="46"/>
    </location>
</feature>
<feature type="active site" description="Proton acceptor; specific for L-alanine" evidence="1">
    <location>
        <position position="280"/>
    </location>
</feature>
<feature type="binding site" evidence="1">
    <location>
        <position position="145"/>
    </location>
    <ligand>
        <name>substrate</name>
    </ligand>
</feature>
<feature type="binding site" evidence="1">
    <location>
        <position position="328"/>
    </location>
    <ligand>
        <name>substrate</name>
    </ligand>
</feature>
<feature type="modified residue" description="N6-(pyridoxal phosphate)lysine" evidence="1">
    <location>
        <position position="46"/>
    </location>
</feature>
<proteinExistence type="inferred from homology"/>
<accession>A9WVT5</accession>